<evidence type="ECO:0000255" key="1">
    <source>
        <dbReference type="PROSITE-ProRule" id="PRU00978"/>
    </source>
</evidence>
<evidence type="ECO:0000256" key="2">
    <source>
        <dbReference type="SAM" id="MobiDB-lite"/>
    </source>
</evidence>
<evidence type="ECO:0000269" key="3">
    <source>
    </source>
</evidence>
<evidence type="ECO:0000269" key="4">
    <source>
    </source>
</evidence>
<evidence type="ECO:0000269" key="5">
    <source>
    </source>
</evidence>
<evidence type="ECO:0000269" key="6">
    <source>
    </source>
</evidence>
<evidence type="ECO:0000269" key="7">
    <source>
    </source>
</evidence>
<evidence type="ECO:0000269" key="8">
    <source>
    </source>
</evidence>
<evidence type="ECO:0000303" key="9">
    <source>
    </source>
</evidence>
<evidence type="ECO:0000305" key="10"/>
<evidence type="ECO:0000305" key="11">
    <source>
    </source>
</evidence>
<evidence type="ECO:0000312" key="12">
    <source>
        <dbReference type="EMBL" id="AAX37359.1"/>
    </source>
</evidence>
<evidence type="ECO:0000312" key="13">
    <source>
        <dbReference type="EMBL" id="CCD64134.1"/>
    </source>
</evidence>
<evidence type="ECO:0000312" key="14">
    <source>
        <dbReference type="WormBase" id="F29G9.4a"/>
    </source>
</evidence>
<evidence type="ECO:0000312" key="15">
    <source>
        <dbReference type="WormBase" id="F29G9.4b"/>
    </source>
</evidence>
<accession>G5ECG2</accession>
<accession>G5EDK8</accession>
<dbReference type="EMBL" id="AY835432">
    <property type="protein sequence ID" value="AAX37359.1"/>
    <property type="molecule type" value="mRNA"/>
</dbReference>
<dbReference type="EMBL" id="AY835433">
    <property type="protein sequence ID" value="AAX37360.1"/>
    <property type="molecule type" value="mRNA"/>
</dbReference>
<dbReference type="EMBL" id="FO080494">
    <property type="protein sequence ID" value="CCD64133.1"/>
    <property type="molecule type" value="Genomic_DNA"/>
</dbReference>
<dbReference type="EMBL" id="FO080494">
    <property type="protein sequence ID" value="CCD64134.1"/>
    <property type="molecule type" value="Genomic_DNA"/>
</dbReference>
<dbReference type="PIR" id="T31799">
    <property type="entry name" value="T31799"/>
</dbReference>
<dbReference type="RefSeq" id="NP_001033480.1">
    <property type="nucleotide sequence ID" value="NM_001038391.3"/>
</dbReference>
<dbReference type="RefSeq" id="NP_001033481.1">
    <molecule id="G5ECG2-1"/>
    <property type="nucleotide sequence ID" value="NM_001038392.5"/>
</dbReference>
<dbReference type="RefSeq" id="NP_001379653.1">
    <molecule id="G5ECG2-2"/>
    <property type="nucleotide sequence ID" value="NM_001392524.1"/>
</dbReference>
<dbReference type="SMR" id="G5ECG2"/>
<dbReference type="FunCoup" id="G5ECG2">
    <property type="interactions" value="392"/>
</dbReference>
<dbReference type="IntAct" id="G5ECG2">
    <property type="interactions" value="3"/>
</dbReference>
<dbReference type="STRING" id="6239.F29G9.4b.1"/>
<dbReference type="iPTMnet" id="G5ECG2"/>
<dbReference type="PaxDb" id="6239-F29G9.4b"/>
<dbReference type="EnsemblMetazoa" id="F29G9.4a.1">
    <molecule id="G5ECG2-2"/>
    <property type="protein sequence ID" value="F29G9.4a.1"/>
    <property type="gene ID" value="WBGene00001345"/>
</dbReference>
<dbReference type="EnsemblMetazoa" id="F29G9.4a.2">
    <molecule id="G5ECG2-2"/>
    <property type="protein sequence ID" value="F29G9.4a.2"/>
    <property type="gene ID" value="WBGene00001345"/>
</dbReference>
<dbReference type="EnsemblMetazoa" id="F29G9.4a.3">
    <molecule id="G5ECG2-2"/>
    <property type="protein sequence ID" value="F29G9.4a.3"/>
    <property type="gene ID" value="WBGene00001345"/>
</dbReference>
<dbReference type="EnsemblMetazoa" id="F29G9.4a.4">
    <molecule id="G5ECG2-2"/>
    <property type="protein sequence ID" value="F29G9.4a.4"/>
    <property type="gene ID" value="WBGene00001345"/>
</dbReference>
<dbReference type="EnsemblMetazoa" id="F29G9.4a.5">
    <molecule id="G5ECG2-2"/>
    <property type="protein sequence ID" value="F29G9.4a.5"/>
    <property type="gene ID" value="WBGene00001345"/>
</dbReference>
<dbReference type="EnsemblMetazoa" id="F29G9.4b.1">
    <molecule id="G5ECG2-1"/>
    <property type="protein sequence ID" value="F29G9.4b.1"/>
    <property type="gene ID" value="WBGene00001345"/>
</dbReference>
<dbReference type="GeneID" id="178987"/>
<dbReference type="KEGG" id="cel:CELE_F29G9.4"/>
<dbReference type="AGR" id="WB:WBGene00001345"/>
<dbReference type="CTD" id="178987"/>
<dbReference type="WormBase" id="F29G9.4a">
    <molecule id="G5ECG2-2"/>
    <property type="protein sequence ID" value="CE27375"/>
    <property type="gene ID" value="WBGene00001345"/>
    <property type="gene designation" value="fos-1"/>
</dbReference>
<dbReference type="WormBase" id="F29G9.4b">
    <molecule id="G5ECG2-1"/>
    <property type="protein sequence ID" value="CE39151"/>
    <property type="gene ID" value="WBGene00001345"/>
    <property type="gene designation" value="fos-1"/>
</dbReference>
<dbReference type="eggNOG" id="KOG1414">
    <property type="taxonomic scope" value="Eukaryota"/>
</dbReference>
<dbReference type="InParanoid" id="G5ECG2"/>
<dbReference type="OMA" id="LETHDCK"/>
<dbReference type="OrthoDB" id="2187714at2759"/>
<dbReference type="Reactome" id="R-CEL-2559580">
    <property type="pathway name" value="Oxidative Stress Induced Senescence"/>
</dbReference>
<dbReference type="Reactome" id="R-CEL-2871796">
    <property type="pathway name" value="FCERI mediated MAPK activation"/>
</dbReference>
<dbReference type="Reactome" id="R-CEL-450341">
    <property type="pathway name" value="Activation of the AP-1 family of transcription factors"/>
</dbReference>
<dbReference type="PRO" id="PR:G5ECG2"/>
<dbReference type="Proteomes" id="UP000001940">
    <property type="component" value="Chromosome V"/>
</dbReference>
<dbReference type="Bgee" id="WBGene00001345">
    <property type="expression patterns" value="Expressed in pharyngeal muscle cell (C elegans) and 3 other cell types or tissues"/>
</dbReference>
<dbReference type="GO" id="GO:0005634">
    <property type="term" value="C:nucleus"/>
    <property type="evidence" value="ECO:0000314"/>
    <property type="project" value="WormBase"/>
</dbReference>
<dbReference type="GO" id="GO:0090575">
    <property type="term" value="C:RNA polymerase II transcription regulator complex"/>
    <property type="evidence" value="ECO:0000353"/>
    <property type="project" value="WormBase"/>
</dbReference>
<dbReference type="GO" id="GO:0003682">
    <property type="term" value="F:chromatin binding"/>
    <property type="evidence" value="ECO:0000314"/>
    <property type="project" value="WormBase"/>
</dbReference>
<dbReference type="GO" id="GO:0000981">
    <property type="term" value="F:DNA-binding transcription factor activity, RNA polymerase II-specific"/>
    <property type="evidence" value="ECO:0000318"/>
    <property type="project" value="GO_Central"/>
</dbReference>
<dbReference type="GO" id="GO:0042802">
    <property type="term" value="F:identical protein binding"/>
    <property type="evidence" value="ECO:0000353"/>
    <property type="project" value="WormBase"/>
</dbReference>
<dbReference type="GO" id="GO:0000978">
    <property type="term" value="F:RNA polymerase II cis-regulatory region sequence-specific DNA binding"/>
    <property type="evidence" value="ECO:0000318"/>
    <property type="project" value="GO_Central"/>
</dbReference>
<dbReference type="GO" id="GO:0000977">
    <property type="term" value="F:RNA polymerase II transcription regulatory region sequence-specific DNA binding"/>
    <property type="evidence" value="ECO:0000314"/>
    <property type="project" value="WormBase"/>
</dbReference>
<dbReference type="GO" id="GO:0061629">
    <property type="term" value="F:RNA polymerase II-specific DNA-binding transcription factor binding"/>
    <property type="evidence" value="ECO:0000353"/>
    <property type="project" value="WormBase"/>
</dbReference>
<dbReference type="GO" id="GO:0043565">
    <property type="term" value="F:sequence-specific DNA binding"/>
    <property type="evidence" value="ECO:0000314"/>
    <property type="project" value="WormBase"/>
</dbReference>
<dbReference type="GO" id="GO:0009653">
    <property type="term" value="P:anatomical structure morphogenesis"/>
    <property type="evidence" value="ECO:0000315"/>
    <property type="project" value="WormBase"/>
</dbReference>
<dbReference type="GO" id="GO:0034769">
    <property type="term" value="P:basement membrane disassembly"/>
    <property type="evidence" value="ECO:0000315"/>
    <property type="project" value="UniProtKB"/>
</dbReference>
<dbReference type="GO" id="GO:0001708">
    <property type="term" value="P:cell fate specification"/>
    <property type="evidence" value="ECO:0000315"/>
    <property type="project" value="WormBase"/>
</dbReference>
<dbReference type="GO" id="GO:0008340">
    <property type="term" value="P:determination of adult lifespan"/>
    <property type="evidence" value="ECO:0000315"/>
    <property type="project" value="UniProtKB"/>
</dbReference>
<dbReference type="GO" id="GO:0045087">
    <property type="term" value="P:innate immune response"/>
    <property type="evidence" value="ECO:0007007"/>
    <property type="project" value="WormBase"/>
</dbReference>
<dbReference type="GO" id="GO:1903854">
    <property type="term" value="P:negative regulation of stress response to copper ion"/>
    <property type="evidence" value="ECO:0000315"/>
    <property type="project" value="WormBase"/>
</dbReference>
<dbReference type="GO" id="GO:0000122">
    <property type="term" value="P:negative regulation of transcription by RNA polymerase II"/>
    <property type="evidence" value="ECO:0000315"/>
    <property type="project" value="WormBase"/>
</dbReference>
<dbReference type="GO" id="GO:0045893">
    <property type="term" value="P:positive regulation of DNA-templated transcription"/>
    <property type="evidence" value="ECO:0000315"/>
    <property type="project" value="WormBase"/>
</dbReference>
<dbReference type="GO" id="GO:0010628">
    <property type="term" value="P:positive regulation of gene expression"/>
    <property type="evidence" value="ECO:0000315"/>
    <property type="project" value="UniProtKB"/>
</dbReference>
<dbReference type="GO" id="GO:0045944">
    <property type="term" value="P:positive regulation of transcription by RNA polymerase II"/>
    <property type="evidence" value="ECO:0000315"/>
    <property type="project" value="WormBase"/>
</dbReference>
<dbReference type="GO" id="GO:0060142">
    <property type="term" value="P:regulation of syncytium formation by plasma membrane fusion"/>
    <property type="evidence" value="ECO:0000315"/>
    <property type="project" value="WormBase"/>
</dbReference>
<dbReference type="GO" id="GO:0006357">
    <property type="term" value="P:regulation of transcription by RNA polymerase II"/>
    <property type="evidence" value="ECO:0000318"/>
    <property type="project" value="GO_Central"/>
</dbReference>
<dbReference type="GO" id="GO:0042594">
    <property type="term" value="P:response to starvation"/>
    <property type="evidence" value="ECO:0000315"/>
    <property type="project" value="UniProtKB"/>
</dbReference>
<dbReference type="GO" id="GO:0040025">
    <property type="term" value="P:vulval development"/>
    <property type="evidence" value="ECO:0000315"/>
    <property type="project" value="WormBase"/>
</dbReference>
<dbReference type="CDD" id="cd14699">
    <property type="entry name" value="bZIP_Fos_like"/>
    <property type="match status" value="1"/>
</dbReference>
<dbReference type="Gene3D" id="1.20.5.170">
    <property type="match status" value="1"/>
</dbReference>
<dbReference type="InterPro" id="IPR000837">
    <property type="entry name" value="AP-1"/>
</dbReference>
<dbReference type="InterPro" id="IPR004827">
    <property type="entry name" value="bZIP"/>
</dbReference>
<dbReference type="InterPro" id="IPR046347">
    <property type="entry name" value="bZIP_sf"/>
</dbReference>
<dbReference type="PANTHER" id="PTHR23351">
    <property type="entry name" value="FOS TRANSCRIPTION FACTOR-RELATED"/>
    <property type="match status" value="1"/>
</dbReference>
<dbReference type="PANTHER" id="PTHR23351:SF57">
    <property type="entry name" value="TRANSCRIPTION FACTOR FOS-1"/>
    <property type="match status" value="1"/>
</dbReference>
<dbReference type="Pfam" id="PF00170">
    <property type="entry name" value="bZIP_1"/>
    <property type="match status" value="1"/>
</dbReference>
<dbReference type="SMART" id="SM00338">
    <property type="entry name" value="BRLZ"/>
    <property type="match status" value="1"/>
</dbReference>
<dbReference type="SUPFAM" id="SSF57959">
    <property type="entry name" value="Leucine zipper domain"/>
    <property type="match status" value="1"/>
</dbReference>
<dbReference type="PROSITE" id="PS50217">
    <property type="entry name" value="BZIP"/>
    <property type="match status" value="1"/>
</dbReference>
<dbReference type="PROSITE" id="PS00036">
    <property type="entry name" value="BZIP_BASIC"/>
    <property type="match status" value="1"/>
</dbReference>
<feature type="chain" id="PRO_0000432855" description="Transcription factor fos-1" evidence="10">
    <location>
        <begin position="1"/>
        <end position="467"/>
    </location>
</feature>
<feature type="domain" description="bZIP" evidence="1">
    <location>
        <begin position="163"/>
        <end position="226"/>
    </location>
</feature>
<feature type="region of interest" description="Disordered" evidence="2">
    <location>
        <begin position="1"/>
        <end position="38"/>
    </location>
</feature>
<feature type="region of interest" description="Disordered" evidence="2">
    <location>
        <begin position="139"/>
        <end position="179"/>
    </location>
</feature>
<feature type="region of interest" description="Basic motif" evidence="1">
    <location>
        <begin position="165"/>
        <end position="205"/>
    </location>
</feature>
<feature type="region of interest" description="Leucine-zipper" evidence="1">
    <location>
        <begin position="212"/>
        <end position="219"/>
    </location>
</feature>
<feature type="region of interest" description="Disordered" evidence="2">
    <location>
        <begin position="266"/>
        <end position="291"/>
    </location>
</feature>
<feature type="region of interest" description="Disordered" evidence="2">
    <location>
        <begin position="395"/>
        <end position="467"/>
    </location>
</feature>
<feature type="compositionally biased region" description="Low complexity" evidence="2">
    <location>
        <begin position="1"/>
        <end position="22"/>
    </location>
</feature>
<feature type="compositionally biased region" description="Low complexity" evidence="2">
    <location>
        <begin position="273"/>
        <end position="286"/>
    </location>
</feature>
<feature type="compositionally biased region" description="Polar residues" evidence="2">
    <location>
        <begin position="434"/>
        <end position="454"/>
    </location>
</feature>
<feature type="modified residue" description="Phosphothreonine" evidence="7">
    <location>
        <position position="440"/>
    </location>
</feature>
<feature type="modified residue" description="Phosphothreonine" evidence="7">
    <location>
        <position position="452"/>
    </location>
</feature>
<feature type="modified residue" description="Phosphothreonine" evidence="7">
    <location>
        <position position="454"/>
    </location>
</feature>
<feature type="splice variant" id="VSP_057614" description="In isoform a.">
    <location>
        <begin position="1"/>
        <end position="136"/>
    </location>
</feature>
<feature type="mutagenesis site" description="Decreased phosphorylation by kgb-1. Loss of phosphorylation by kgb-1; when associated with A-452 and A-454." evidence="7">
    <original>T</original>
    <variation>A</variation>
    <location>
        <position position="440"/>
    </location>
</feature>
<feature type="mutagenesis site" description="Loss of phosphorylation by kgb-1; when associated with A-440 and A-454." evidence="7">
    <original>T</original>
    <variation>A</variation>
    <location>
        <position position="452"/>
    </location>
</feature>
<feature type="mutagenesis site" description="Loss of phosphorylation by kgb-1; when associated with A-440 and A-452." evidence="7">
    <original>T</original>
    <variation>A</variation>
    <location>
        <position position="454"/>
    </location>
</feature>
<organism>
    <name type="scientific">Caenorhabditis elegans</name>
    <dbReference type="NCBI Taxonomy" id="6239"/>
    <lineage>
        <taxon>Eukaryota</taxon>
        <taxon>Metazoa</taxon>
        <taxon>Ecdysozoa</taxon>
        <taxon>Nematoda</taxon>
        <taxon>Chromadorea</taxon>
        <taxon>Rhabditida</taxon>
        <taxon>Rhabditina</taxon>
        <taxon>Rhabditomorpha</taxon>
        <taxon>Rhabditoidea</taxon>
        <taxon>Rhabditidae</taxon>
        <taxon>Peloderinae</taxon>
        <taxon>Caenorhabditis</taxon>
    </lineage>
</organism>
<proteinExistence type="evidence at protein level"/>
<comment type="function">
    <text evidence="7">Developmentally regulated transcription factor which binds and recognizes the enhancer DNA sequence 5'-TGA[CG]TCA-3' (PubMed:23437011).</text>
</comment>
<comment type="function">
    <molecule>Isoform a</molecule>
    <text evidence="3 4 5 8">Plays a role the development of the reproductive system, controlling events including anchor cell (AC) fusion and invasion (PubMed:15960981, PubMed:17488621). Regulates downstream transcriptional targets, including zmp-1, cdh-3, him-4 and mig10b, to promote the removal of the gonadal basement membrane during AC invasion (PubMed:15960981, PubMed:24553288). Regulates aff-1 expression to promote AC fusion (PubMed:17488621). With jun-1 regulates egl-1 and lin-12 expression to allow uterine cell specification and development (PubMed:17942488).</text>
</comment>
<comment type="function">
    <molecule>Isoform b</molecule>
    <text evidence="6 7">Required for ovulation (PubMed:19570917). Controls plc-1 expression in the spermatheca to regulate spermathecal valve dilation (PubMed:19570917). Acts with hda-1 as a downstream repressor of the kgb-1 mediated stress response pathway that transcriptionally represses genes involved in the response to heavy metals, such as kreg-1 (PubMed:23437011).</text>
</comment>
<comment type="subunit">
    <text evidence="7 11">Homodimer (PubMed:23437011). Heterodimer; with jun-1 (PubMed:17942488). Interacts with kgb-1 and hda-1 (PubMed:23437011).</text>
</comment>
<comment type="interaction">
    <interactant intactId="EBI-6728159">
        <id>G5ECG2</id>
    </interactant>
    <interactant intactId="EBI-2414388">
        <id>G5ECU7</id>
        <label>jun-1</label>
    </interactant>
    <organismsDiffer>false</organismsDiffer>
    <experiments>3</experiments>
</comment>
<comment type="subcellular location">
    <subcellularLocation>
        <location evidence="1 3">Nucleus</location>
    </subcellularLocation>
</comment>
<comment type="alternative products">
    <event type="alternative splicing"/>
    <isoform>
        <id>G5ECG2-1</id>
        <name evidence="15">b</name>
        <name evidence="9">a</name>
        <sequence type="displayed"/>
    </isoform>
    <isoform>
        <id>G5ECG2-2</id>
        <name evidence="14">a</name>
        <name evidence="9">b</name>
        <sequence type="described" ref="VSP_057614"/>
    </isoform>
    <text evidence="9">Additional isoforms seem to exist.</text>
</comment>
<comment type="tissue specificity">
    <text evidence="3 6">Expressed in anchor cells (PubMed:15960981). Isoform a is expressed in somatic gonad cells that neighbor anchor cells (PubMed:15960981, PubMed:19570917). Isoform b is expressed in vulval cells, the uterine cells that neighbor anchor cells and the spermatheca (PubMed:15960981, PubMed:19570917).</text>
</comment>
<comment type="developmental stage">
    <molecule>Isoform a</molecule>
    <text evidence="3 5">Detected before the L2 molt stage (PubMed:15960981). Expressed throughout ventral uterine intermediate precursor cells (PubMed:17942488).</text>
</comment>
<comment type="PTM">
    <text evidence="7">May be phosphorylated by kgb-1. Phosphorylation at Thr-440 increases sensitivity to heavy metal stress. Phosphorylation inhibits homodimer formation, and promotes association with target promoters.</text>
</comment>
<comment type="disruption phenotype">
    <molecule>Isoform a</molecule>
    <text evidence="3 4 5 6 7 8">Animals are sterile and display a protruding vulva phenotype (PubMed:17942488). Animals have uterine defects lacking both a uterine lumen and a utse-like process; subsequently fail to develop a differentiated uterus. Furthermore, uterine seam cell genes egl-13 and lin-11 are not expressed during late larval development (PubMed:17942488). At the L3 developmental stage, AC display either failed or delayed invasion leading to the defective removal of the gonadal basement-membrane (PubMed:15960981, PubMed:17488621). AC do not fuse (PubMed:17488621). AC specific expression of lin-3 is increased, but zmp-1, him-4 and aff-1 expression is undetectable and cdh-3 expression is reduced (PubMed:15960981, PubMed:17488621). RNAi-mediated knockdown of both isoforms results in sterility, a protruding vulva and exploded through the vulva phenotypes (PubMed:17942488, PubMed:19570917). Animals have an undifferentiated uterus and lack uterine egl-13 expression (PubMed:17942488). Animals also display an endomitotic oocytes phenotype, which is due to improper distal spermathecal valve dilation and reduced plc-1 expression in the spermatheca (PubMed:19570917). Animals have no mig-10b expression in AC (PubMed:24553288). RNAi-mediated knockdown of isoform b results in an everted/protruded vulval phenotype in adults (PubMed:23437011).</text>
</comment>
<comment type="similarity">
    <text evidence="10">Belongs to the bZIP family. Fos subfamily.</text>
</comment>
<sequence>MFEQPSSTTNTTTSSGSGSDSNHYFELGPRNPINQAHPTSVIVPPRQHHHQIHQQQTDNSPLTPCTPYYPSNAYGLPLFFGTDFLQFQPSDIPSPLTPNISSPLTPHPFGPIPAIPTNQIYNRTFTDFYSTAASSPMVQYSTVKKSSAGRKPKEEDNMEDDDDDKRLKRRQRNKEAAARCRQRRIDLMKELQDQVNDFKNSNDKKMAECNNIRNKLNSLKNYLETHDCKLSREERTHEINRLIIPPSTVPPSQPYLQHSLRVHPPRADSVPYSIRSGHSSSSSEQHSPVEDYKPSIDQLLLPPISCIQNIKDRNINSMPPPALPASTSAAGIHVITSIPVSHANSLHGRSENVFAEPERKIPKIELDQTLTSLTMPDDVERPSALPTLSRIVENQPITTPSRPFRLGGEYQNQTPQSTGNGLFGGPPGPFDLLSSNTGLTPSGQPTMNFVSTPTPIQPHPDADLRPL</sequence>
<reference evidence="12" key="1">
    <citation type="journal article" date="2005" name="Cell">
        <title>FOS-1 promotes basement-membrane removal during anchor-cell invasion in C. elegans.</title>
        <authorList>
            <person name="Sherwood D.R."/>
            <person name="Butler J.A."/>
            <person name="Kramer J.M."/>
            <person name="Sternberg P.W."/>
        </authorList>
    </citation>
    <scope>NUCLEOTIDE SEQUENCE [MRNA] (ISOFORMS A AND B)</scope>
    <scope>FUNCTION (ISOFORM A)</scope>
    <scope>SUBCELLULAR LOCATION</scope>
    <scope>TISSUE SPECIFICITY</scope>
    <scope>DEVELOPMENTAL STAGE</scope>
    <scope>DISRUPTION PHENOTYPE</scope>
</reference>
<reference evidence="13" key="2">
    <citation type="journal article" date="1998" name="Science">
        <title>Genome sequence of the nematode C. elegans: a platform for investigating biology.</title>
        <authorList>
            <consortium name="The C. elegans sequencing consortium"/>
        </authorList>
    </citation>
    <scope>NUCLEOTIDE SEQUENCE [LARGE SCALE GENOMIC DNA]</scope>
    <source>
        <strain evidence="13">Bristol N2</strain>
    </source>
</reference>
<reference evidence="10" key="3">
    <citation type="journal article" date="2007" name="Development">
        <title>Co-regulation by Notch and Fos is required for cell fate specification of intermediate precursors during C. elegans uterine development.</title>
        <authorList>
            <person name="Oommen K.S."/>
            <person name="Newman A.P."/>
        </authorList>
    </citation>
    <scope>FUNCTION (ISOFORM A)</scope>
    <scope>DEVELOPMENTAL STAGE</scope>
    <scope>DISRUPTION PHENOTYPE</scope>
    <scope>PROBABLE INTERACTION WITH JUN-1</scope>
</reference>
<reference evidence="10" key="4">
    <citation type="journal article" date="2007" name="Dev. Cell">
        <title>AFF-1, a FOS-1-regulated fusogen, mediates fusion of the anchor cell in C. elegans.</title>
        <authorList>
            <person name="Sapir A."/>
            <person name="Choi J."/>
            <person name="Leikina E."/>
            <person name="Avinoam O."/>
            <person name="Valansi C."/>
            <person name="Chernomordik L.V."/>
            <person name="Newman A.P."/>
            <person name="Podbilewicz B."/>
        </authorList>
    </citation>
    <scope>FUNCTION (ISOFORM A)</scope>
    <scope>DISRUPTION PHENOTYPE</scope>
</reference>
<reference evidence="10" key="5">
    <citation type="journal article" date="2009" name="Mol. Biol. Cell">
        <title>Caenorhabditis elegans FOS-1 and JUN-1 regulate plc-1 expression in the spermatheca to control ovulation.</title>
        <authorList>
            <person name="Hiatt S.M."/>
            <person name="Duren H.M."/>
            <person name="Shyu Y.J."/>
            <person name="Ellis R.E."/>
            <person name="Hisamoto N."/>
            <person name="Matsumoto K."/>
            <person name="Kariya K."/>
            <person name="Kerppola T.K."/>
            <person name="Hu C.D."/>
        </authorList>
    </citation>
    <scope>FUNCTION (ISOFORM B)</scope>
    <scope>TISSUE SPECIFICITY</scope>
    <scope>DISRUPTION PHENOTYPE</scope>
</reference>
<reference evidence="10" key="6">
    <citation type="journal article" date="2013" name="PLoS Genet.">
        <title>The Caenorhabditis elegans JNK signaling pathway activates expression of stress response genes by derepressing the Fos/HDAC repressor complex.</title>
        <authorList>
            <person name="Hattori A."/>
            <person name="Mizuno T."/>
            <person name="Akamatsu M."/>
            <person name="Hisamoto N."/>
            <person name="Matsumoto K."/>
        </authorList>
    </citation>
    <scope>FUNCTION (ISOFORM B)</scope>
    <scope>SUBUNIT</scope>
    <scope>DISRUPTION PHENOTYPE</scope>
    <scope>INTERACTION WITH KGB-1 AND HDA-1</scope>
    <scope>MUTAGENESIS OF THR-440; THR-452 AND THR-454</scope>
    <scope>PHOSPHORYLATION AT THR-440; THR-452 AND THR-454</scope>
</reference>
<reference evidence="10" key="7">
    <citation type="journal article" date="2014" name="Development">
        <title>MIG-10 (lamellipodin) has netrin-independent functions and is a FOS-1A transcriptional target during anchor cell invasion in C. elegans.</title>
        <authorList>
            <person name="Wang Z."/>
            <person name="Chi Q."/>
            <person name="Sherwood D.R."/>
        </authorList>
    </citation>
    <scope>FUNCTION (ISOFORM A)</scope>
    <scope>DISRUPTION PHENOTYPE</scope>
</reference>
<keyword id="KW-0025">Alternative splicing</keyword>
<keyword id="KW-0175">Coiled coil</keyword>
<keyword id="KW-0238">DNA-binding</keyword>
<keyword id="KW-0539">Nucleus</keyword>
<keyword id="KW-0597">Phosphoprotein</keyword>
<keyword id="KW-1185">Reference proteome</keyword>
<keyword id="KW-0678">Repressor</keyword>
<keyword id="KW-0346">Stress response</keyword>
<keyword id="KW-0804">Transcription</keyword>
<keyword id="KW-0805">Transcription regulation</keyword>
<gene>
    <name evidence="15" type="primary">fos-1</name>
    <name evidence="14" type="synonym">evl-5</name>
    <name evidence="15" type="ORF">F29G9.4</name>
</gene>
<name>FOS1_CAEEL</name>
<protein>
    <recommendedName>
        <fullName evidence="10">Transcription factor fos-1</fullName>
    </recommendedName>
</protein>